<protein>
    <recommendedName>
        <fullName evidence="2">Large ribosomal subunit protein uL10c</fullName>
    </recommendedName>
    <alternativeName>
        <fullName>50S ribosomal protein L10, chloroplastic</fullName>
    </alternativeName>
    <alternativeName>
        <fullName>CL10</fullName>
    </alternativeName>
</protein>
<gene>
    <name type="primary">RPL10</name>
</gene>
<feature type="transit peptide" description="Chloroplast" evidence="1">
    <location>
        <begin position="1"/>
        <end position="47"/>
    </location>
</feature>
<feature type="chain" id="PRO_0000249188" description="Large ribosomal subunit protein uL10c">
    <location>
        <begin position="48"/>
        <end position="227"/>
    </location>
</feature>
<proteinExistence type="evidence at transcript level"/>
<keyword id="KW-0150">Chloroplast</keyword>
<keyword id="KW-0934">Plastid</keyword>
<keyword id="KW-1185">Reference proteome</keyword>
<keyword id="KW-0687">Ribonucleoprotein</keyword>
<keyword id="KW-0689">Ribosomal protein</keyword>
<keyword id="KW-0694">RNA-binding</keyword>
<keyword id="KW-0699">rRNA-binding</keyword>
<keyword id="KW-0809">Transit peptide</keyword>
<dbReference type="EMBL" id="AB010879">
    <property type="protein sequence ID" value="BAA31511.1"/>
    <property type="molecule type" value="mRNA"/>
</dbReference>
<dbReference type="PIR" id="T01743">
    <property type="entry name" value="T01743"/>
</dbReference>
<dbReference type="RefSeq" id="NP_001311729.1">
    <property type="nucleotide sequence ID" value="NM_001324800.1"/>
</dbReference>
<dbReference type="SMR" id="O80362"/>
<dbReference type="STRING" id="4097.O80362"/>
<dbReference type="PaxDb" id="4097-O80362"/>
<dbReference type="GeneID" id="107763454"/>
<dbReference type="KEGG" id="nta:107763454"/>
<dbReference type="OMA" id="PLCHQRI"/>
<dbReference type="OrthoDB" id="360689at2759"/>
<dbReference type="Proteomes" id="UP000084051">
    <property type="component" value="Unplaced"/>
</dbReference>
<dbReference type="GO" id="GO:0009507">
    <property type="term" value="C:chloroplast"/>
    <property type="evidence" value="ECO:0007669"/>
    <property type="project" value="UniProtKB-SubCell"/>
</dbReference>
<dbReference type="GO" id="GO:1990904">
    <property type="term" value="C:ribonucleoprotein complex"/>
    <property type="evidence" value="ECO:0007669"/>
    <property type="project" value="UniProtKB-KW"/>
</dbReference>
<dbReference type="GO" id="GO:0005840">
    <property type="term" value="C:ribosome"/>
    <property type="evidence" value="ECO:0007669"/>
    <property type="project" value="UniProtKB-KW"/>
</dbReference>
<dbReference type="GO" id="GO:0019843">
    <property type="term" value="F:rRNA binding"/>
    <property type="evidence" value="ECO:0007669"/>
    <property type="project" value="UniProtKB-KW"/>
</dbReference>
<dbReference type="CDD" id="cd05797">
    <property type="entry name" value="Ribosomal_L10"/>
    <property type="match status" value="1"/>
</dbReference>
<dbReference type="FunFam" id="3.30.70.1730:FF:000007">
    <property type="entry name" value="50S ribosomal protein L10"/>
    <property type="match status" value="1"/>
</dbReference>
<dbReference type="Gene3D" id="3.30.70.1730">
    <property type="match status" value="1"/>
</dbReference>
<dbReference type="Gene3D" id="6.10.250.290">
    <property type="match status" value="1"/>
</dbReference>
<dbReference type="HAMAP" id="MF_00362">
    <property type="entry name" value="Ribosomal_uL10"/>
    <property type="match status" value="1"/>
</dbReference>
<dbReference type="InterPro" id="IPR001790">
    <property type="entry name" value="Ribosomal_uL10"/>
</dbReference>
<dbReference type="InterPro" id="IPR043141">
    <property type="entry name" value="Ribosomal_uL10-like_sf"/>
</dbReference>
<dbReference type="InterPro" id="IPR022973">
    <property type="entry name" value="Ribosomal_uL10_bac"/>
</dbReference>
<dbReference type="InterPro" id="IPR047865">
    <property type="entry name" value="Ribosomal_uL10_bac_type"/>
</dbReference>
<dbReference type="NCBIfam" id="NF000955">
    <property type="entry name" value="PRK00099.1-1"/>
    <property type="match status" value="1"/>
</dbReference>
<dbReference type="PANTHER" id="PTHR11560">
    <property type="entry name" value="39S RIBOSOMAL PROTEIN L10, MITOCHONDRIAL"/>
    <property type="match status" value="1"/>
</dbReference>
<dbReference type="Pfam" id="PF00466">
    <property type="entry name" value="Ribosomal_L10"/>
    <property type="match status" value="1"/>
</dbReference>
<dbReference type="SUPFAM" id="SSF160369">
    <property type="entry name" value="Ribosomal protein L10-like"/>
    <property type="match status" value="1"/>
</dbReference>
<reference key="1">
    <citation type="submission" date="1998-01" db="EMBL/GenBank/DDBJ databases">
        <title>Tobacco chloroplast ribosomal protein L10.</title>
        <authorList>
            <person name="Yokoi F."/>
            <person name="Ohta M."/>
            <person name="Sugiura M."/>
        </authorList>
    </citation>
    <scope>NUCLEOTIDE SEQUENCE [MRNA]</scope>
    <source>
        <strain>cv. Bright Yellow 4</strain>
        <tissue>Leaf</tissue>
    </source>
</reference>
<organism>
    <name type="scientific">Nicotiana tabacum</name>
    <name type="common">Common tobacco</name>
    <dbReference type="NCBI Taxonomy" id="4097"/>
    <lineage>
        <taxon>Eukaryota</taxon>
        <taxon>Viridiplantae</taxon>
        <taxon>Streptophyta</taxon>
        <taxon>Embryophyta</taxon>
        <taxon>Tracheophyta</taxon>
        <taxon>Spermatophyta</taxon>
        <taxon>Magnoliopsida</taxon>
        <taxon>eudicotyledons</taxon>
        <taxon>Gunneridae</taxon>
        <taxon>Pentapetalae</taxon>
        <taxon>asterids</taxon>
        <taxon>lamiids</taxon>
        <taxon>Solanales</taxon>
        <taxon>Solanaceae</taxon>
        <taxon>Nicotianoideae</taxon>
        <taxon>Nicotianeae</taxon>
        <taxon>Nicotiana</taxon>
    </lineage>
</organism>
<comment type="function">
    <text evidence="1">This protein binds directly to 23S ribosomal RNA.</text>
</comment>
<comment type="subunit">
    <text>Part of the 50S ribosomal subunit.</text>
</comment>
<comment type="subcellular location">
    <subcellularLocation>
        <location evidence="1">Plastid</location>
        <location evidence="1">Chloroplast</location>
    </subcellularLocation>
</comment>
<comment type="similarity">
    <text evidence="2">Belongs to the universal ribosomal protein uL10 family.</text>
</comment>
<name>RK10_TOBAC</name>
<evidence type="ECO:0000250" key="1"/>
<evidence type="ECO:0000305" key="2"/>
<accession>O80362</accession>
<sequence length="227" mass="25413">MEATFFTLPSSTSHSYPFSLKSHFNNSLTLPTHPHFKPKSKNLTIRSAISRTKKEETVETVKQQLEDCYLLAGIGYKGLTVKQFQELRSQLPDTTKLLVAKNTLVLKAIEGTKWEALKPCMKGMNAWLFVHSEEIPAALKPYRTFQKEKKLEENDFTGAVFEGKFYGPEEFKALETLPTRAEIYAQLLGSLKGPASAVVGTIQAPARNLVMVLKAYVKKLEEEGGSQ</sequence>